<accession>A6QI49</accession>
<reference key="1">
    <citation type="journal article" date="2008" name="J. Bacteriol.">
        <title>Genome sequence of Staphylococcus aureus strain Newman and comparative analysis of staphylococcal genomes: polymorphism and evolution of two major pathogenicity islands.</title>
        <authorList>
            <person name="Baba T."/>
            <person name="Bae T."/>
            <person name="Schneewind O."/>
            <person name="Takeuchi F."/>
            <person name="Hiramatsu K."/>
        </authorList>
    </citation>
    <scope>NUCLEOTIDE SEQUENCE [LARGE SCALE GENOMIC DNA]</scope>
    <source>
        <strain>Newman</strain>
    </source>
</reference>
<protein>
    <recommendedName>
        <fullName evidence="1">Nucleoside triphosphate/diphosphate phosphatase</fullName>
        <ecNumber evidence="1">3.6.1.15</ecNumber>
        <ecNumber evidence="1">3.6.1.6</ecNumber>
    </recommendedName>
</protein>
<keyword id="KW-0378">Hydrolase</keyword>
<keyword id="KW-0460">Magnesium</keyword>
<keyword id="KW-0479">Metal-binding</keyword>
<feature type="chain" id="PRO_1000073585" description="Nucleoside triphosphate/diphosphate phosphatase">
    <location>
        <begin position="1"/>
        <end position="180"/>
    </location>
</feature>
<feature type="active site" description="Proton donor" evidence="1">
    <location>
        <position position="26"/>
    </location>
</feature>
<feature type="binding site" evidence="1">
    <location>
        <position position="90"/>
    </location>
    <ligand>
        <name>Mg(2+)</name>
        <dbReference type="ChEBI" id="CHEBI:18420"/>
        <label>1</label>
    </ligand>
</feature>
<feature type="binding site" evidence="1">
    <location>
        <position position="106"/>
    </location>
    <ligand>
        <name>Mg(2+)</name>
        <dbReference type="ChEBI" id="CHEBI:18420"/>
        <label>1</label>
    </ligand>
</feature>
<feature type="binding site" evidence="1">
    <location>
        <position position="108"/>
    </location>
    <ligand>
        <name>Mg(2+)</name>
        <dbReference type="ChEBI" id="CHEBI:18420"/>
        <label>2</label>
    </ligand>
</feature>
<feature type="binding site" evidence="1">
    <location>
        <position position="110"/>
    </location>
    <ligand>
        <name>Mg(2+)</name>
        <dbReference type="ChEBI" id="CHEBI:18420"/>
        <label>1</label>
    </ligand>
</feature>
<feature type="binding site" evidence="1">
    <location>
        <position position="110"/>
    </location>
    <ligand>
        <name>Mg(2+)</name>
        <dbReference type="ChEBI" id="CHEBI:18420"/>
        <label>2</label>
    </ligand>
</feature>
<feature type="binding site" evidence="1">
    <location>
        <position position="123"/>
    </location>
    <ligand>
        <name>Mg(2+)</name>
        <dbReference type="ChEBI" id="CHEBI:18420"/>
        <label>2</label>
    </ligand>
</feature>
<feature type="binding site" evidence="1">
    <location>
        <position position="126"/>
    </location>
    <ligand>
        <name>Mg(2+)</name>
        <dbReference type="ChEBI" id="CHEBI:18420"/>
        <label>2</label>
    </ligand>
</feature>
<evidence type="ECO:0000255" key="1">
    <source>
        <dbReference type="HAMAP-Rule" id="MF_01568"/>
    </source>
</evidence>
<dbReference type="EC" id="3.6.1.15" evidence="1"/>
<dbReference type="EC" id="3.6.1.6" evidence="1"/>
<dbReference type="EMBL" id="AP009351">
    <property type="protein sequence ID" value="BAF68031.1"/>
    <property type="molecule type" value="Genomic_DNA"/>
</dbReference>
<dbReference type="RefSeq" id="WP_000251253.1">
    <property type="nucleotide sequence ID" value="NZ_JBBIAE010000020.1"/>
</dbReference>
<dbReference type="SMR" id="A6QI49"/>
<dbReference type="KEGG" id="sae:NWMN_1759"/>
<dbReference type="HOGENOM" id="CLU_109787_1_0_9"/>
<dbReference type="Proteomes" id="UP000006386">
    <property type="component" value="Chromosome"/>
</dbReference>
<dbReference type="GO" id="GO:0000287">
    <property type="term" value="F:magnesium ion binding"/>
    <property type="evidence" value="ECO:0007669"/>
    <property type="project" value="UniProtKB-UniRule"/>
</dbReference>
<dbReference type="GO" id="GO:0017110">
    <property type="term" value="F:nucleoside diphosphate phosphatase activity"/>
    <property type="evidence" value="ECO:0007669"/>
    <property type="project" value="UniProtKB-UniRule"/>
</dbReference>
<dbReference type="GO" id="GO:0017111">
    <property type="term" value="F:ribonucleoside triphosphate phosphatase activity"/>
    <property type="evidence" value="ECO:0007669"/>
    <property type="project" value="UniProtKB-UniRule"/>
</dbReference>
<dbReference type="Gene3D" id="2.40.380.10">
    <property type="entry name" value="FomD-like"/>
    <property type="match status" value="1"/>
</dbReference>
<dbReference type="HAMAP" id="MF_01568">
    <property type="entry name" value="Ntdp"/>
    <property type="match status" value="1"/>
</dbReference>
<dbReference type="InterPro" id="IPR007295">
    <property type="entry name" value="DUF402"/>
</dbReference>
<dbReference type="InterPro" id="IPR035930">
    <property type="entry name" value="FomD-like_sf"/>
</dbReference>
<dbReference type="InterPro" id="IPR050212">
    <property type="entry name" value="Ntdp-like"/>
</dbReference>
<dbReference type="InterPro" id="IPR016882">
    <property type="entry name" value="SA1684"/>
</dbReference>
<dbReference type="NCBIfam" id="NF010183">
    <property type="entry name" value="PRK13662.1"/>
    <property type="match status" value="1"/>
</dbReference>
<dbReference type="PANTHER" id="PTHR39159">
    <property type="match status" value="1"/>
</dbReference>
<dbReference type="PANTHER" id="PTHR39159:SF1">
    <property type="entry name" value="UPF0374 PROTEIN YGAC"/>
    <property type="match status" value="1"/>
</dbReference>
<dbReference type="Pfam" id="PF04167">
    <property type="entry name" value="DUF402"/>
    <property type="match status" value="1"/>
</dbReference>
<dbReference type="PIRSF" id="PIRSF028345">
    <property type="entry name" value="UCP028345"/>
    <property type="match status" value="1"/>
</dbReference>
<dbReference type="SUPFAM" id="SSF159234">
    <property type="entry name" value="FomD-like"/>
    <property type="match status" value="1"/>
</dbReference>
<sequence>MVRESIPKEGENIKIQSYKHDGKIHRVWSETTILKGTDHVVIGGNDHTLVTESDGRTWITREPAIVYFHSEYWFNVICMFREDGIYYYCNLSSPFVCDEEALKYIDYDLDIKVYPNGKYHLLDEDEYEQHMNQMNYPHDIDIILRRNVDILQQWIEQKKGPFAPDFIKVWKERYKKIRQY</sequence>
<gene>
    <name type="ordered locus">NWMN_1759</name>
</gene>
<organism>
    <name type="scientific">Staphylococcus aureus (strain Newman)</name>
    <dbReference type="NCBI Taxonomy" id="426430"/>
    <lineage>
        <taxon>Bacteria</taxon>
        <taxon>Bacillati</taxon>
        <taxon>Bacillota</taxon>
        <taxon>Bacilli</taxon>
        <taxon>Bacillales</taxon>
        <taxon>Staphylococcaceae</taxon>
        <taxon>Staphylococcus</taxon>
    </lineage>
</organism>
<proteinExistence type="inferred from homology"/>
<comment type="function">
    <text evidence="1">Has nucleoside phosphatase activity towards nucleoside triphosphates and nucleoside diphosphates.</text>
</comment>
<comment type="catalytic activity">
    <reaction evidence="1">
        <text>a ribonucleoside 5'-triphosphate + H2O = a ribonucleoside 5'-diphosphate + phosphate + H(+)</text>
        <dbReference type="Rhea" id="RHEA:23680"/>
        <dbReference type="ChEBI" id="CHEBI:15377"/>
        <dbReference type="ChEBI" id="CHEBI:15378"/>
        <dbReference type="ChEBI" id="CHEBI:43474"/>
        <dbReference type="ChEBI" id="CHEBI:57930"/>
        <dbReference type="ChEBI" id="CHEBI:61557"/>
        <dbReference type="EC" id="3.6.1.15"/>
    </reaction>
</comment>
<comment type="catalytic activity">
    <reaction evidence="1">
        <text>a ribonucleoside 5'-diphosphate + H2O = a ribonucleoside 5'-phosphate + phosphate + H(+)</text>
        <dbReference type="Rhea" id="RHEA:36799"/>
        <dbReference type="ChEBI" id="CHEBI:15377"/>
        <dbReference type="ChEBI" id="CHEBI:15378"/>
        <dbReference type="ChEBI" id="CHEBI:43474"/>
        <dbReference type="ChEBI" id="CHEBI:57930"/>
        <dbReference type="ChEBI" id="CHEBI:58043"/>
        <dbReference type="EC" id="3.6.1.6"/>
    </reaction>
</comment>
<comment type="cofactor">
    <cofactor evidence="1">
        <name>Mg(2+)</name>
        <dbReference type="ChEBI" id="CHEBI:18420"/>
    </cofactor>
</comment>
<comment type="similarity">
    <text evidence="1">Belongs to the Ntdp family.</text>
</comment>
<name>NTDP_STAAE</name>